<name>HARS1_MOUSE</name>
<accession>Q61035</accession>
<accession>Q3TKU3</accession>
<feature type="initiator methionine" description="Removed" evidence="2">
    <location>
        <position position="1"/>
    </location>
</feature>
<feature type="chain" id="PRO_0000136334" description="Histidine--tRNA ligase, cytoplasmic">
    <location>
        <begin position="2"/>
        <end position="509"/>
    </location>
</feature>
<feature type="domain" description="WHEP-TRS" evidence="4">
    <location>
        <begin position="3"/>
        <end position="59"/>
    </location>
</feature>
<feature type="binding site" evidence="2">
    <location>
        <begin position="130"/>
        <end position="132"/>
    </location>
    <ligand>
        <name>L-histidine</name>
        <dbReference type="ChEBI" id="CHEBI:57595"/>
    </ligand>
</feature>
<feature type="binding site" evidence="2">
    <location>
        <position position="157"/>
    </location>
    <ligand>
        <name>L-histidine</name>
        <dbReference type="ChEBI" id="CHEBI:57595"/>
    </ligand>
</feature>
<feature type="binding site" evidence="2">
    <location>
        <position position="173"/>
    </location>
    <ligand>
        <name>L-histidine</name>
        <dbReference type="ChEBI" id="CHEBI:57595"/>
    </ligand>
</feature>
<feature type="binding site" evidence="2">
    <location>
        <position position="177"/>
    </location>
    <ligand>
        <name>L-histidine</name>
        <dbReference type="ChEBI" id="CHEBI:57595"/>
    </ligand>
</feature>
<feature type="binding site" evidence="2">
    <location>
        <position position="326"/>
    </location>
    <ligand>
        <name>L-histidine</name>
        <dbReference type="ChEBI" id="CHEBI:57595"/>
    </ligand>
</feature>
<feature type="binding site" evidence="2">
    <location>
        <begin position="330"/>
        <end position="331"/>
    </location>
    <ligand>
        <name>L-histidine</name>
        <dbReference type="ChEBI" id="CHEBI:57595"/>
    </ligand>
</feature>
<feature type="modified residue" description="N-acetylalanine" evidence="2">
    <location>
        <position position="2"/>
    </location>
</feature>
<feature type="modified residue" description="Phosphoserine" evidence="3">
    <location>
        <position position="66"/>
    </location>
</feature>
<feature type="modified residue" description="Phosphoserine" evidence="2">
    <location>
        <position position="356"/>
    </location>
</feature>
<feature type="sequence conflict" description="In Ref. 1; AAC52914." evidence="5" ref="1">
    <original>R</original>
    <variation>Q</variation>
    <location>
        <position position="490"/>
    </location>
</feature>
<feature type="sequence conflict" description="In Ref. 1; AAC52914." evidence="5" ref="1">
    <original>T</original>
    <variation>I</variation>
    <location>
        <position position="508"/>
    </location>
</feature>
<proteinExistence type="evidence at protein level"/>
<dbReference type="EC" id="6.1.1.21" evidence="2"/>
<dbReference type="EMBL" id="U39473">
    <property type="protein sequence ID" value="AAC52914.1"/>
    <property type="molecule type" value="mRNA"/>
</dbReference>
<dbReference type="EMBL" id="AK146922">
    <property type="protein sequence ID" value="BAE27533.1"/>
    <property type="molecule type" value="mRNA"/>
</dbReference>
<dbReference type="EMBL" id="AK166826">
    <property type="protein sequence ID" value="BAE39050.1"/>
    <property type="molecule type" value="mRNA"/>
</dbReference>
<dbReference type="EMBL" id="AK166892">
    <property type="protein sequence ID" value="BAE39097.1"/>
    <property type="molecule type" value="mRNA"/>
</dbReference>
<dbReference type="CCDS" id="CCDS29164.1"/>
<dbReference type="PIR" id="JC5223">
    <property type="entry name" value="JC5223"/>
</dbReference>
<dbReference type="RefSeq" id="NP_032240.3">
    <property type="nucleotide sequence ID" value="NM_008214.4"/>
</dbReference>
<dbReference type="SMR" id="Q61035"/>
<dbReference type="BioGRID" id="200208">
    <property type="interactions" value="19"/>
</dbReference>
<dbReference type="FunCoup" id="Q61035">
    <property type="interactions" value="4049"/>
</dbReference>
<dbReference type="STRING" id="10090.ENSMUSP00000001416"/>
<dbReference type="GlyGen" id="Q61035">
    <property type="glycosylation" value="1 site, 1 O-linked glycan (1 site)"/>
</dbReference>
<dbReference type="iPTMnet" id="Q61035"/>
<dbReference type="PhosphoSitePlus" id="Q61035"/>
<dbReference type="SwissPalm" id="Q61035"/>
<dbReference type="jPOST" id="Q61035"/>
<dbReference type="PaxDb" id="10090-ENSMUSP00000001416"/>
<dbReference type="PeptideAtlas" id="Q61035"/>
<dbReference type="ProteomicsDB" id="257518"/>
<dbReference type="Pumba" id="Q61035"/>
<dbReference type="Antibodypedia" id="15372">
    <property type="antibodies" value="301 antibodies from 33 providers"/>
</dbReference>
<dbReference type="DNASU" id="15115"/>
<dbReference type="Ensembl" id="ENSMUST00000001416.8">
    <property type="protein sequence ID" value="ENSMUSP00000001416.7"/>
    <property type="gene ID" value="ENSMUSG00000001380.8"/>
</dbReference>
<dbReference type="GeneID" id="15115"/>
<dbReference type="KEGG" id="mmu:15115"/>
<dbReference type="UCSC" id="uc008eop.2">
    <property type="organism name" value="mouse"/>
</dbReference>
<dbReference type="AGR" id="MGI:108087"/>
<dbReference type="CTD" id="3035"/>
<dbReference type="MGI" id="MGI:108087">
    <property type="gene designation" value="Hars1"/>
</dbReference>
<dbReference type="VEuPathDB" id="HostDB:ENSMUSG00000001380"/>
<dbReference type="eggNOG" id="KOG1936">
    <property type="taxonomic scope" value="Eukaryota"/>
</dbReference>
<dbReference type="GeneTree" id="ENSGT00390000005922"/>
<dbReference type="HOGENOM" id="CLU_025113_4_2_1"/>
<dbReference type="InParanoid" id="Q61035"/>
<dbReference type="OMA" id="CGGGNFK"/>
<dbReference type="OrthoDB" id="1906957at2759"/>
<dbReference type="PhylomeDB" id="Q61035"/>
<dbReference type="TreeFam" id="TF300652"/>
<dbReference type="BRENDA" id="6.1.1.21">
    <property type="organism ID" value="3474"/>
</dbReference>
<dbReference type="BioGRID-ORCS" id="15115">
    <property type="hits" value="27 hits in 78 CRISPR screens"/>
</dbReference>
<dbReference type="ChiTaRS" id="Hars">
    <property type="organism name" value="mouse"/>
</dbReference>
<dbReference type="PRO" id="PR:Q61035"/>
<dbReference type="Proteomes" id="UP000000589">
    <property type="component" value="Chromosome 18"/>
</dbReference>
<dbReference type="RNAct" id="Q61035">
    <property type="molecule type" value="protein"/>
</dbReference>
<dbReference type="Bgee" id="ENSMUSG00000001380">
    <property type="expression patterns" value="Expressed in dorsal pancreas and 289 other cell types or tissues"/>
</dbReference>
<dbReference type="ExpressionAtlas" id="Q61035">
    <property type="expression patterns" value="baseline and differential"/>
</dbReference>
<dbReference type="GO" id="GO:0005737">
    <property type="term" value="C:cytoplasm"/>
    <property type="evidence" value="ECO:0000250"/>
    <property type="project" value="UniProtKB"/>
</dbReference>
<dbReference type="GO" id="GO:0005829">
    <property type="term" value="C:cytosol"/>
    <property type="evidence" value="ECO:0007669"/>
    <property type="project" value="Ensembl"/>
</dbReference>
<dbReference type="GO" id="GO:0005524">
    <property type="term" value="F:ATP binding"/>
    <property type="evidence" value="ECO:0000250"/>
    <property type="project" value="UniProtKB"/>
</dbReference>
<dbReference type="GO" id="GO:0004821">
    <property type="term" value="F:histidine-tRNA ligase activity"/>
    <property type="evidence" value="ECO:0000250"/>
    <property type="project" value="UniProtKB"/>
</dbReference>
<dbReference type="GO" id="GO:0042803">
    <property type="term" value="F:protein homodimerization activity"/>
    <property type="evidence" value="ECO:0000250"/>
    <property type="project" value="UniProtKB"/>
</dbReference>
<dbReference type="GO" id="GO:0006427">
    <property type="term" value="P:histidyl-tRNA aminoacylation"/>
    <property type="evidence" value="ECO:0000250"/>
    <property type="project" value="UniProtKB"/>
</dbReference>
<dbReference type="CDD" id="cd00773">
    <property type="entry name" value="HisRS-like_core"/>
    <property type="match status" value="1"/>
</dbReference>
<dbReference type="CDD" id="cd00859">
    <property type="entry name" value="HisRS_anticodon"/>
    <property type="match status" value="1"/>
</dbReference>
<dbReference type="CDD" id="cd00938">
    <property type="entry name" value="HisRS_RNA"/>
    <property type="match status" value="1"/>
</dbReference>
<dbReference type="FunFam" id="3.40.50.800:FF:000008">
    <property type="entry name" value="histidine--tRNA ligase, cytoplasmic isoform X1"/>
    <property type="match status" value="1"/>
</dbReference>
<dbReference type="FunFam" id="1.10.287.10:FF:000008">
    <property type="entry name" value="histidine--tRNA ligase, cytoplasmic isoform X6"/>
    <property type="match status" value="1"/>
</dbReference>
<dbReference type="FunFam" id="3.30.930.10:FF:000021">
    <property type="entry name" value="Probable histidine--tRNA ligase, mitochondrial"/>
    <property type="match status" value="1"/>
</dbReference>
<dbReference type="Gene3D" id="3.40.50.800">
    <property type="entry name" value="Anticodon-binding domain"/>
    <property type="match status" value="1"/>
</dbReference>
<dbReference type="Gene3D" id="3.30.930.10">
    <property type="entry name" value="Bira Bifunctional Protein, Domain 2"/>
    <property type="match status" value="1"/>
</dbReference>
<dbReference type="Gene3D" id="1.10.287.10">
    <property type="entry name" value="S15/NS1, RNA-binding"/>
    <property type="match status" value="1"/>
</dbReference>
<dbReference type="InterPro" id="IPR006195">
    <property type="entry name" value="aa-tRNA-synth_II"/>
</dbReference>
<dbReference type="InterPro" id="IPR045864">
    <property type="entry name" value="aa-tRNA-synth_II/BPL/LPL"/>
</dbReference>
<dbReference type="InterPro" id="IPR004154">
    <property type="entry name" value="Anticodon-bd"/>
</dbReference>
<dbReference type="InterPro" id="IPR036621">
    <property type="entry name" value="Anticodon-bd_dom_sf"/>
</dbReference>
<dbReference type="InterPro" id="IPR015807">
    <property type="entry name" value="His-tRNA-ligase"/>
</dbReference>
<dbReference type="InterPro" id="IPR041715">
    <property type="entry name" value="HisRS-like_core"/>
</dbReference>
<dbReference type="InterPro" id="IPR004516">
    <property type="entry name" value="HisRS/HisZ"/>
</dbReference>
<dbReference type="InterPro" id="IPR033656">
    <property type="entry name" value="HisRS_anticodon"/>
</dbReference>
<dbReference type="InterPro" id="IPR009068">
    <property type="entry name" value="uS15_NS1_RNA-bd_sf"/>
</dbReference>
<dbReference type="InterPro" id="IPR000738">
    <property type="entry name" value="WHEP-TRS_dom"/>
</dbReference>
<dbReference type="NCBIfam" id="TIGR00442">
    <property type="entry name" value="hisS"/>
    <property type="match status" value="1"/>
</dbReference>
<dbReference type="PANTHER" id="PTHR11476:SF8">
    <property type="entry name" value="HISTIDINE--TRNA LIGASE, CYTOPLASMIC"/>
    <property type="match status" value="1"/>
</dbReference>
<dbReference type="PANTHER" id="PTHR11476">
    <property type="entry name" value="HISTIDYL-TRNA SYNTHETASE"/>
    <property type="match status" value="1"/>
</dbReference>
<dbReference type="Pfam" id="PF03129">
    <property type="entry name" value="HGTP_anticodon"/>
    <property type="match status" value="1"/>
</dbReference>
<dbReference type="Pfam" id="PF13393">
    <property type="entry name" value="tRNA-synt_His"/>
    <property type="match status" value="1"/>
</dbReference>
<dbReference type="Pfam" id="PF00458">
    <property type="entry name" value="WHEP-TRS"/>
    <property type="match status" value="1"/>
</dbReference>
<dbReference type="PIRSF" id="PIRSF001549">
    <property type="entry name" value="His-tRNA_synth"/>
    <property type="match status" value="1"/>
</dbReference>
<dbReference type="SMART" id="SM00991">
    <property type="entry name" value="WHEP-TRS"/>
    <property type="match status" value="1"/>
</dbReference>
<dbReference type="SUPFAM" id="SSF52954">
    <property type="entry name" value="Class II aaRS ABD-related"/>
    <property type="match status" value="1"/>
</dbReference>
<dbReference type="SUPFAM" id="SSF55681">
    <property type="entry name" value="Class II aaRS and biotin synthetases"/>
    <property type="match status" value="1"/>
</dbReference>
<dbReference type="SUPFAM" id="SSF47060">
    <property type="entry name" value="S15/NS1 RNA-binding domain"/>
    <property type="match status" value="1"/>
</dbReference>
<dbReference type="PROSITE" id="PS50862">
    <property type="entry name" value="AA_TRNA_LIGASE_II"/>
    <property type="match status" value="1"/>
</dbReference>
<dbReference type="PROSITE" id="PS00762">
    <property type="entry name" value="WHEP_TRS_1"/>
    <property type="match status" value="1"/>
</dbReference>
<dbReference type="PROSITE" id="PS51185">
    <property type="entry name" value="WHEP_TRS_2"/>
    <property type="match status" value="1"/>
</dbReference>
<keyword id="KW-0007">Acetylation</keyword>
<keyword id="KW-0030">Aminoacyl-tRNA synthetase</keyword>
<keyword id="KW-0067">ATP-binding</keyword>
<keyword id="KW-0963">Cytoplasm</keyword>
<keyword id="KW-0436">Ligase</keyword>
<keyword id="KW-0547">Nucleotide-binding</keyword>
<keyword id="KW-0597">Phosphoprotein</keyword>
<keyword id="KW-0648">Protein biosynthesis</keyword>
<keyword id="KW-1185">Reference proteome</keyword>
<evidence type="ECO:0000250" key="1">
    <source>
        <dbReference type="UniProtKB" id="F1Q5D5"/>
    </source>
</evidence>
<evidence type="ECO:0000250" key="2">
    <source>
        <dbReference type="UniProtKB" id="P12081"/>
    </source>
</evidence>
<evidence type="ECO:0000250" key="3">
    <source>
        <dbReference type="UniProtKB" id="Q99KK9"/>
    </source>
</evidence>
<evidence type="ECO:0000255" key="4">
    <source>
        <dbReference type="PROSITE-ProRule" id="PRU00531"/>
    </source>
</evidence>
<evidence type="ECO:0000305" key="5"/>
<organism>
    <name type="scientific">Mus musculus</name>
    <name type="common">Mouse</name>
    <dbReference type="NCBI Taxonomy" id="10090"/>
    <lineage>
        <taxon>Eukaryota</taxon>
        <taxon>Metazoa</taxon>
        <taxon>Chordata</taxon>
        <taxon>Craniata</taxon>
        <taxon>Vertebrata</taxon>
        <taxon>Euteleostomi</taxon>
        <taxon>Mammalia</taxon>
        <taxon>Eutheria</taxon>
        <taxon>Euarchontoglires</taxon>
        <taxon>Glires</taxon>
        <taxon>Rodentia</taxon>
        <taxon>Myomorpha</taxon>
        <taxon>Muroidea</taxon>
        <taxon>Muridae</taxon>
        <taxon>Murinae</taxon>
        <taxon>Mus</taxon>
        <taxon>Mus</taxon>
    </lineage>
</organism>
<reference key="1">
    <citation type="journal article" date="1996" name="Gene">
        <title>Sequence and polymorphism analysis of the murine gene encoding histidyl-tRNA synthetase.</title>
        <authorList>
            <person name="Blechynden L.M."/>
            <person name="Lawson C.M."/>
            <person name="Garlepp M.J."/>
        </authorList>
    </citation>
    <scope>NUCLEOTIDE SEQUENCE [MRNA]</scope>
</reference>
<reference key="2">
    <citation type="journal article" date="2005" name="Science">
        <title>The transcriptional landscape of the mammalian genome.</title>
        <authorList>
            <person name="Carninci P."/>
            <person name="Kasukawa T."/>
            <person name="Katayama S."/>
            <person name="Gough J."/>
            <person name="Frith M.C."/>
            <person name="Maeda N."/>
            <person name="Oyama R."/>
            <person name="Ravasi T."/>
            <person name="Lenhard B."/>
            <person name="Wells C."/>
            <person name="Kodzius R."/>
            <person name="Shimokawa K."/>
            <person name="Bajic V.B."/>
            <person name="Brenner S.E."/>
            <person name="Batalov S."/>
            <person name="Forrest A.R."/>
            <person name="Zavolan M."/>
            <person name="Davis M.J."/>
            <person name="Wilming L.G."/>
            <person name="Aidinis V."/>
            <person name="Allen J.E."/>
            <person name="Ambesi-Impiombato A."/>
            <person name="Apweiler R."/>
            <person name="Aturaliya R.N."/>
            <person name="Bailey T.L."/>
            <person name="Bansal M."/>
            <person name="Baxter L."/>
            <person name="Beisel K.W."/>
            <person name="Bersano T."/>
            <person name="Bono H."/>
            <person name="Chalk A.M."/>
            <person name="Chiu K.P."/>
            <person name="Choudhary V."/>
            <person name="Christoffels A."/>
            <person name="Clutterbuck D.R."/>
            <person name="Crowe M.L."/>
            <person name="Dalla E."/>
            <person name="Dalrymple B.P."/>
            <person name="de Bono B."/>
            <person name="Della Gatta G."/>
            <person name="di Bernardo D."/>
            <person name="Down T."/>
            <person name="Engstrom P."/>
            <person name="Fagiolini M."/>
            <person name="Faulkner G."/>
            <person name="Fletcher C.F."/>
            <person name="Fukushima T."/>
            <person name="Furuno M."/>
            <person name="Futaki S."/>
            <person name="Gariboldi M."/>
            <person name="Georgii-Hemming P."/>
            <person name="Gingeras T.R."/>
            <person name="Gojobori T."/>
            <person name="Green R.E."/>
            <person name="Gustincich S."/>
            <person name="Harbers M."/>
            <person name="Hayashi Y."/>
            <person name="Hensch T.K."/>
            <person name="Hirokawa N."/>
            <person name="Hill D."/>
            <person name="Huminiecki L."/>
            <person name="Iacono M."/>
            <person name="Ikeo K."/>
            <person name="Iwama A."/>
            <person name="Ishikawa T."/>
            <person name="Jakt M."/>
            <person name="Kanapin A."/>
            <person name="Katoh M."/>
            <person name="Kawasawa Y."/>
            <person name="Kelso J."/>
            <person name="Kitamura H."/>
            <person name="Kitano H."/>
            <person name="Kollias G."/>
            <person name="Krishnan S.P."/>
            <person name="Kruger A."/>
            <person name="Kummerfeld S.K."/>
            <person name="Kurochkin I.V."/>
            <person name="Lareau L.F."/>
            <person name="Lazarevic D."/>
            <person name="Lipovich L."/>
            <person name="Liu J."/>
            <person name="Liuni S."/>
            <person name="McWilliam S."/>
            <person name="Madan Babu M."/>
            <person name="Madera M."/>
            <person name="Marchionni L."/>
            <person name="Matsuda H."/>
            <person name="Matsuzawa S."/>
            <person name="Miki H."/>
            <person name="Mignone F."/>
            <person name="Miyake S."/>
            <person name="Morris K."/>
            <person name="Mottagui-Tabar S."/>
            <person name="Mulder N."/>
            <person name="Nakano N."/>
            <person name="Nakauchi H."/>
            <person name="Ng P."/>
            <person name="Nilsson R."/>
            <person name="Nishiguchi S."/>
            <person name="Nishikawa S."/>
            <person name="Nori F."/>
            <person name="Ohara O."/>
            <person name="Okazaki Y."/>
            <person name="Orlando V."/>
            <person name="Pang K.C."/>
            <person name="Pavan W.J."/>
            <person name="Pavesi G."/>
            <person name="Pesole G."/>
            <person name="Petrovsky N."/>
            <person name="Piazza S."/>
            <person name="Reed J."/>
            <person name="Reid J.F."/>
            <person name="Ring B.Z."/>
            <person name="Ringwald M."/>
            <person name="Rost B."/>
            <person name="Ruan Y."/>
            <person name="Salzberg S.L."/>
            <person name="Sandelin A."/>
            <person name="Schneider C."/>
            <person name="Schoenbach C."/>
            <person name="Sekiguchi K."/>
            <person name="Semple C.A."/>
            <person name="Seno S."/>
            <person name="Sessa L."/>
            <person name="Sheng Y."/>
            <person name="Shibata Y."/>
            <person name="Shimada H."/>
            <person name="Shimada K."/>
            <person name="Silva D."/>
            <person name="Sinclair B."/>
            <person name="Sperling S."/>
            <person name="Stupka E."/>
            <person name="Sugiura K."/>
            <person name="Sultana R."/>
            <person name="Takenaka Y."/>
            <person name="Taki K."/>
            <person name="Tammoja K."/>
            <person name="Tan S.L."/>
            <person name="Tang S."/>
            <person name="Taylor M.S."/>
            <person name="Tegner J."/>
            <person name="Teichmann S.A."/>
            <person name="Ueda H.R."/>
            <person name="van Nimwegen E."/>
            <person name="Verardo R."/>
            <person name="Wei C.L."/>
            <person name="Yagi K."/>
            <person name="Yamanishi H."/>
            <person name="Zabarovsky E."/>
            <person name="Zhu S."/>
            <person name="Zimmer A."/>
            <person name="Hide W."/>
            <person name="Bult C."/>
            <person name="Grimmond S.M."/>
            <person name="Teasdale R.D."/>
            <person name="Liu E.T."/>
            <person name="Brusic V."/>
            <person name="Quackenbush J."/>
            <person name="Wahlestedt C."/>
            <person name="Mattick J.S."/>
            <person name="Hume D.A."/>
            <person name="Kai C."/>
            <person name="Sasaki D."/>
            <person name="Tomaru Y."/>
            <person name="Fukuda S."/>
            <person name="Kanamori-Katayama M."/>
            <person name="Suzuki M."/>
            <person name="Aoki J."/>
            <person name="Arakawa T."/>
            <person name="Iida J."/>
            <person name="Imamura K."/>
            <person name="Itoh M."/>
            <person name="Kato T."/>
            <person name="Kawaji H."/>
            <person name="Kawagashira N."/>
            <person name="Kawashima T."/>
            <person name="Kojima M."/>
            <person name="Kondo S."/>
            <person name="Konno H."/>
            <person name="Nakano K."/>
            <person name="Ninomiya N."/>
            <person name="Nishio T."/>
            <person name="Okada M."/>
            <person name="Plessy C."/>
            <person name="Shibata K."/>
            <person name="Shiraki T."/>
            <person name="Suzuki S."/>
            <person name="Tagami M."/>
            <person name="Waki K."/>
            <person name="Watahiki A."/>
            <person name="Okamura-Oho Y."/>
            <person name="Suzuki H."/>
            <person name="Kawai J."/>
            <person name="Hayashizaki Y."/>
        </authorList>
    </citation>
    <scope>NUCLEOTIDE SEQUENCE [LARGE SCALE MRNA]</scope>
    <source>
        <strain>C57BL/6J</strain>
        <tissue>Kidney</tissue>
    </source>
</reference>
<reference key="3">
    <citation type="journal article" date="2010" name="Cell">
        <title>A tissue-specific atlas of mouse protein phosphorylation and expression.</title>
        <authorList>
            <person name="Huttlin E.L."/>
            <person name="Jedrychowski M.P."/>
            <person name="Elias J.E."/>
            <person name="Goswami T."/>
            <person name="Rad R."/>
            <person name="Beausoleil S.A."/>
            <person name="Villen J."/>
            <person name="Haas W."/>
            <person name="Sowa M.E."/>
            <person name="Gygi S.P."/>
        </authorList>
    </citation>
    <scope>IDENTIFICATION BY MASS SPECTROMETRY [LARGE SCALE ANALYSIS]</scope>
    <source>
        <tissue>Brain</tissue>
        <tissue>Brown adipose tissue</tissue>
        <tissue>Heart</tissue>
        <tissue>Kidney</tissue>
        <tissue>Liver</tissue>
        <tissue>Lung</tissue>
        <tissue>Pancreas</tissue>
        <tissue>Spleen</tissue>
        <tissue>Testis</tissue>
    </source>
</reference>
<comment type="function">
    <text evidence="2">Catalyzes the ATP-dependent ligation of histidine to the 3'-end of its cognate tRNA, via the formation of an aminoacyl-adenylate intermediate (His-AMP). Plays a role in axon guidance.</text>
</comment>
<comment type="catalytic activity">
    <reaction evidence="2">
        <text>tRNA(His) + L-histidine + ATP = L-histidyl-tRNA(His) + AMP + diphosphate + H(+)</text>
        <dbReference type="Rhea" id="RHEA:17313"/>
        <dbReference type="Rhea" id="RHEA-COMP:9665"/>
        <dbReference type="Rhea" id="RHEA-COMP:9689"/>
        <dbReference type="ChEBI" id="CHEBI:15378"/>
        <dbReference type="ChEBI" id="CHEBI:30616"/>
        <dbReference type="ChEBI" id="CHEBI:33019"/>
        <dbReference type="ChEBI" id="CHEBI:57595"/>
        <dbReference type="ChEBI" id="CHEBI:78442"/>
        <dbReference type="ChEBI" id="CHEBI:78527"/>
        <dbReference type="ChEBI" id="CHEBI:456215"/>
        <dbReference type="EC" id="6.1.1.21"/>
    </reaction>
</comment>
<comment type="subunit">
    <text evidence="2">Homodimer.</text>
</comment>
<comment type="subcellular location">
    <subcellularLocation>
        <location evidence="1">Cytoplasm</location>
    </subcellularLocation>
</comment>
<comment type="similarity">
    <text evidence="5">Belongs to the class-II aminoacyl-tRNA synthetase family.</text>
</comment>
<protein>
    <recommendedName>
        <fullName>Histidine--tRNA ligase, cytoplasmic</fullName>
        <ecNumber evidence="2">6.1.1.21</ecNumber>
    </recommendedName>
    <alternativeName>
        <fullName>Histidyl-tRNA synthetase</fullName>
        <shortName>HisRS</shortName>
    </alternativeName>
</protein>
<sequence>MADRAALEELVRLQGAHVRGLKEQKASAEQIEEEVTKLLKLKAQLGQDEGKQKFVLKTPKGTRDYSPRQMAVREKVFDVIIRCFKRHGAEVIDTPVFELKETLTGKYGEDSKLIYDLKDQGGELLSLRYDLTVPFARYLAMNKLTNIKRYHIAKVYRRDNPAMTRGRYREFYQCDFDIAGQFDPMIPDAECLKIMCEILSSLQIGNFLVKVNDRRILDGMFAVCGVPDSKFRTICSSVDKLDKVSWEEVKNEMVGEKGLAPEVADRIGDYVQQHGGVSLVEQLLQDPKLSQNKQAVEGLGDLKLLFEYLILFGIDDKISFDLSLARGLDYYTGVIYEAVLLQMPTQAGEEPLGVGSIAAGGRYDGLVGMFDPKGRKVPCVGLSIGVERIFSIVEQRLEASEEKVRTTETQVLVASAQKKLLEERLKLVSELWDAGIKAELLYKKNPKLLNQLQYCEEAGIPLVAIIGEQELKDGVIKLRSVASREEVDVRREDLVEEIRRRTNQPLSTC</sequence>
<gene>
    <name type="primary">Hars1</name>
    <name type="synonym">Hars</name>
</gene>